<name>ILF3_RAT</name>
<keyword id="KW-0007">Acetylation</keyword>
<keyword id="KW-0025">Alternative splicing</keyword>
<keyword id="KW-0051">Antiviral defense</keyword>
<keyword id="KW-0963">Cytoplasm</keyword>
<keyword id="KW-0238">DNA-binding</keyword>
<keyword id="KW-1017">Isopeptide bond</keyword>
<keyword id="KW-0488">Methylation</keyword>
<keyword id="KW-0539">Nucleus</keyword>
<keyword id="KW-0597">Phosphoprotein</keyword>
<keyword id="KW-1185">Reference proteome</keyword>
<keyword id="KW-0677">Repeat</keyword>
<keyword id="KW-0694">RNA-binding</keyword>
<keyword id="KW-0804">Transcription</keyword>
<keyword id="KW-0805">Transcription regulation</keyword>
<keyword id="KW-0832">Ubl conjugation</keyword>
<gene>
    <name type="primary">Ilf3</name>
</gene>
<sequence>MRPMRIFVNDDRHVMAKHSSVYPTQEELEAVQNMVSHTERALKAVSDWIDEQEKGNSELSEAENMDTPPDDESKEGAGEQKAEHMTRTLRGVMRVGLVAKGLLLKGDLDLELVLLCKEKPTTALLDKVADNLAIQLTTVTEDKYEILQSVDDAAIVIKNTKEPPLSLTIHLTSPVVREEMEKVLAGETLSVNDPPDVLDRQKCLAALASLRHAKWFQARANGLKSCVIVIRVLRDLCTRVPTWGPLRGWPLELLCEKSIGTANRPMGAGEALRRVLECLASGIVMPDGSGIYDPCEKEATDAIGHLDRQQREDITQSAQHALRLAAFGQLHKVLGMDPLPSKMPKKPKNENPVDYTVQIPPSTTYAITPMKRPMEEDGEEKSPSKKKKKIQKKEEKAEPPQAMNALMRLNQLKPGLQYKLISQTGPVHAPIFTMSVEVDGSTFEASGPSKKTAKLHVAVKVLQDMGLPTGAEGRDSSKGEDSAEESDGKPAVVAPPPVVEAVSNPSSVFPSDATTEQGPILTKHGKNPVMELNEKRRGLKYELISETGGSHDKRFVMEVEVDGQKFQGAGSNKKVAKAYAALAALEKLFPDAPLALEANKKKRAPVPVRGGPKFAAKPHNPGFGMGGPMHNEAPPPPNIRGRGRGGNIRGRGRGRGFGGTNHGGGYMNAGAGYGSYGYSSNSATAGYSQFYSNGGHYGNAGGGGSGGGGGSSSYSSYYQGDSYNSPVPPKHAGKKPLHGGQQKPSYSSGYQSHQGQQQPYNQSQYSSYGTPQGKQKGYGHGQGSYSSYSNSYNSPGGGGGSDYSYDSKFNYSGSGGRSGGNSYGSSGSSYNTGSHGGYGAGSGGSSSYQGKQGGYSSQSNYSSPGSSQSYSGPASSYQSSQGGYSRNTEHSMNYQYR</sequence>
<accession>Q9JIL3</accession>
<evidence type="ECO:0000250" key="1">
    <source>
        <dbReference type="UniProtKB" id="Q12906"/>
    </source>
</evidence>
<evidence type="ECO:0000255" key="2"/>
<evidence type="ECO:0000255" key="3">
    <source>
        <dbReference type="PROSITE-ProRule" id="PRU00266"/>
    </source>
</evidence>
<evidence type="ECO:0000255" key="4">
    <source>
        <dbReference type="PROSITE-ProRule" id="PRU01040"/>
    </source>
</evidence>
<evidence type="ECO:0000256" key="5">
    <source>
        <dbReference type="SAM" id="MobiDB-lite"/>
    </source>
</evidence>
<evidence type="ECO:0000303" key="6">
    <source>
    </source>
</evidence>
<evidence type="ECO:0007744" key="7">
    <source>
    </source>
</evidence>
<reference key="1">
    <citation type="journal article" date="2000" name="J. Biol. Chem.">
        <title>Protein-arginine methyltransferase I, the predominant protein-arginine methyltransferase in cells, interacts with and is regulated by interleukin enhancer-binding factor 3.</title>
        <authorList>
            <person name="Tang J."/>
            <person name="Kao P.N."/>
            <person name="Herschman H.R."/>
        </authorList>
    </citation>
    <scope>NUCLEOTIDE SEQUENCE [MRNA] (ISOFORM 2)</scope>
</reference>
<reference key="2">
    <citation type="journal article" date="2004" name="Nature">
        <title>Genome sequence of the Brown Norway rat yields insights into mammalian evolution.</title>
        <authorList>
            <person name="Gibbs R.A."/>
            <person name="Weinstock G.M."/>
            <person name="Metzker M.L."/>
            <person name="Muzny D.M."/>
            <person name="Sodergren E.J."/>
            <person name="Scherer S."/>
            <person name="Scott G."/>
            <person name="Steffen D."/>
            <person name="Worley K.C."/>
            <person name="Burch P.E."/>
            <person name="Okwuonu G."/>
            <person name="Hines S."/>
            <person name="Lewis L."/>
            <person name="Deramo C."/>
            <person name="Delgado O."/>
            <person name="Dugan-Rocha S."/>
            <person name="Miner G."/>
            <person name="Morgan M."/>
            <person name="Hawes A."/>
            <person name="Gill R."/>
            <person name="Holt R.A."/>
            <person name="Adams M.D."/>
            <person name="Amanatides P.G."/>
            <person name="Baden-Tillson H."/>
            <person name="Barnstead M."/>
            <person name="Chin S."/>
            <person name="Evans C.A."/>
            <person name="Ferriera S."/>
            <person name="Fosler C."/>
            <person name="Glodek A."/>
            <person name="Gu Z."/>
            <person name="Jennings D."/>
            <person name="Kraft C.L."/>
            <person name="Nguyen T."/>
            <person name="Pfannkoch C.M."/>
            <person name="Sitter C."/>
            <person name="Sutton G.G."/>
            <person name="Venter J.C."/>
            <person name="Woodage T."/>
            <person name="Smith D."/>
            <person name="Lee H.-M."/>
            <person name="Gustafson E."/>
            <person name="Cahill P."/>
            <person name="Kana A."/>
            <person name="Doucette-Stamm L."/>
            <person name="Weinstock K."/>
            <person name="Fechtel K."/>
            <person name="Weiss R.B."/>
            <person name="Dunn D.M."/>
            <person name="Green E.D."/>
            <person name="Blakesley R.W."/>
            <person name="Bouffard G.G."/>
            <person name="De Jong P.J."/>
            <person name="Osoegawa K."/>
            <person name="Zhu B."/>
            <person name="Marra M."/>
            <person name="Schein J."/>
            <person name="Bosdet I."/>
            <person name="Fjell C."/>
            <person name="Jones S."/>
            <person name="Krzywinski M."/>
            <person name="Mathewson C."/>
            <person name="Siddiqui A."/>
            <person name="Wye N."/>
            <person name="McPherson J."/>
            <person name="Zhao S."/>
            <person name="Fraser C.M."/>
            <person name="Shetty J."/>
            <person name="Shatsman S."/>
            <person name="Geer K."/>
            <person name="Chen Y."/>
            <person name="Abramzon S."/>
            <person name="Nierman W.C."/>
            <person name="Havlak P.H."/>
            <person name="Chen R."/>
            <person name="Durbin K.J."/>
            <person name="Egan A."/>
            <person name="Ren Y."/>
            <person name="Song X.-Z."/>
            <person name="Li B."/>
            <person name="Liu Y."/>
            <person name="Qin X."/>
            <person name="Cawley S."/>
            <person name="Cooney A.J."/>
            <person name="D'Souza L.M."/>
            <person name="Martin K."/>
            <person name="Wu J.Q."/>
            <person name="Gonzalez-Garay M.L."/>
            <person name="Jackson A.R."/>
            <person name="Kalafus K.J."/>
            <person name="McLeod M.P."/>
            <person name="Milosavljevic A."/>
            <person name="Virk D."/>
            <person name="Volkov A."/>
            <person name="Wheeler D.A."/>
            <person name="Zhang Z."/>
            <person name="Bailey J.A."/>
            <person name="Eichler E.E."/>
            <person name="Tuzun E."/>
            <person name="Birney E."/>
            <person name="Mongin E."/>
            <person name="Ureta-Vidal A."/>
            <person name="Woodwark C."/>
            <person name="Zdobnov E."/>
            <person name="Bork P."/>
            <person name="Suyama M."/>
            <person name="Torrents D."/>
            <person name="Alexandersson M."/>
            <person name="Trask B.J."/>
            <person name="Young J.M."/>
            <person name="Huang H."/>
            <person name="Wang H."/>
            <person name="Xing H."/>
            <person name="Daniels S."/>
            <person name="Gietzen D."/>
            <person name="Schmidt J."/>
            <person name="Stevens K."/>
            <person name="Vitt U."/>
            <person name="Wingrove J."/>
            <person name="Camara F."/>
            <person name="Mar Alba M."/>
            <person name="Abril J.F."/>
            <person name="Guigo R."/>
            <person name="Smit A."/>
            <person name="Dubchak I."/>
            <person name="Rubin E.M."/>
            <person name="Couronne O."/>
            <person name="Poliakov A."/>
            <person name="Huebner N."/>
            <person name="Ganten D."/>
            <person name="Goesele C."/>
            <person name="Hummel O."/>
            <person name="Kreitler T."/>
            <person name="Lee Y.-A."/>
            <person name="Monti J."/>
            <person name="Schulz H."/>
            <person name="Zimdahl H."/>
            <person name="Himmelbauer H."/>
            <person name="Lehrach H."/>
            <person name="Jacob H.J."/>
            <person name="Bromberg S."/>
            <person name="Gullings-Handley J."/>
            <person name="Jensen-Seaman M.I."/>
            <person name="Kwitek A.E."/>
            <person name="Lazar J."/>
            <person name="Pasko D."/>
            <person name="Tonellato P.J."/>
            <person name="Twigger S."/>
            <person name="Ponting C.P."/>
            <person name="Duarte J.M."/>
            <person name="Rice S."/>
            <person name="Goodstadt L."/>
            <person name="Beatson S.A."/>
            <person name="Emes R.D."/>
            <person name="Winter E.E."/>
            <person name="Webber C."/>
            <person name="Brandt P."/>
            <person name="Nyakatura G."/>
            <person name="Adetobi M."/>
            <person name="Chiaromonte F."/>
            <person name="Elnitski L."/>
            <person name="Eswara P."/>
            <person name="Hardison R.C."/>
            <person name="Hou M."/>
            <person name="Kolbe D."/>
            <person name="Makova K."/>
            <person name="Miller W."/>
            <person name="Nekrutenko A."/>
            <person name="Riemer C."/>
            <person name="Schwartz S."/>
            <person name="Taylor J."/>
            <person name="Yang S."/>
            <person name="Zhang Y."/>
            <person name="Lindpaintner K."/>
            <person name="Andrews T.D."/>
            <person name="Caccamo M."/>
            <person name="Clamp M."/>
            <person name="Clarke L."/>
            <person name="Curwen V."/>
            <person name="Durbin R.M."/>
            <person name="Eyras E."/>
            <person name="Searle S.M."/>
            <person name="Cooper G.M."/>
            <person name="Batzoglou S."/>
            <person name="Brudno M."/>
            <person name="Sidow A."/>
            <person name="Stone E.A."/>
            <person name="Payseur B.A."/>
            <person name="Bourque G."/>
            <person name="Lopez-Otin C."/>
            <person name="Puente X.S."/>
            <person name="Chakrabarti K."/>
            <person name="Chatterji S."/>
            <person name="Dewey C."/>
            <person name="Pachter L."/>
            <person name="Bray N."/>
            <person name="Yap V.B."/>
            <person name="Caspi A."/>
            <person name="Tesler G."/>
            <person name="Pevzner P.A."/>
            <person name="Haussler D."/>
            <person name="Roskin K.M."/>
            <person name="Baertsch R."/>
            <person name="Clawson H."/>
            <person name="Furey T.S."/>
            <person name="Hinrichs A.S."/>
            <person name="Karolchik D."/>
            <person name="Kent W.J."/>
            <person name="Rosenbloom K.R."/>
            <person name="Trumbower H."/>
            <person name="Weirauch M."/>
            <person name="Cooper D.N."/>
            <person name="Stenson P.D."/>
            <person name="Ma B."/>
            <person name="Brent M."/>
            <person name="Arumugam M."/>
            <person name="Shteynberg D."/>
            <person name="Copley R.R."/>
            <person name="Taylor M.S."/>
            <person name="Riethman H."/>
            <person name="Mudunuri U."/>
            <person name="Peterson J."/>
            <person name="Guyer M."/>
            <person name="Felsenfeld A."/>
            <person name="Old S."/>
            <person name="Mockrin S."/>
            <person name="Collins F.S."/>
        </authorList>
    </citation>
    <scope>NUCLEOTIDE SEQUENCE [LARGE SCALE GENOMIC DNA] (ISOFORM 1)</scope>
    <source>
        <strain>Brown Norway</strain>
    </source>
</reference>
<reference key="3">
    <citation type="journal article" date="2012" name="Nat. Commun.">
        <title>Quantitative maps of protein phosphorylation sites across 14 different rat organs and tissues.</title>
        <authorList>
            <person name="Lundby A."/>
            <person name="Secher A."/>
            <person name="Lage K."/>
            <person name="Nordsborg N.B."/>
            <person name="Dmytriyev A."/>
            <person name="Lundby C."/>
            <person name="Olsen J.V."/>
        </authorList>
    </citation>
    <scope>PHOSPHORYLATION [LARGE SCALE ANALYSIS] AT THR-67; SER-382; SER-476; SER-477; SER-482 AND SER-486</scope>
    <scope>IDENTIFICATION BY MASS SPECTROMETRY [LARGE SCALE ANALYSIS]</scope>
</reference>
<dbReference type="EMBL" id="AF220102">
    <property type="protein sequence ID" value="AAF31446.1"/>
    <property type="molecule type" value="mRNA"/>
</dbReference>
<dbReference type="EMBL" id="AABR03063190">
    <property type="status" value="NOT_ANNOTATED_CDS"/>
    <property type="molecule type" value="Genomic_DNA"/>
</dbReference>
<dbReference type="EMBL" id="AABR03065470">
    <property type="status" value="NOT_ANNOTATED_CDS"/>
    <property type="molecule type" value="Genomic_DNA"/>
</dbReference>
<dbReference type="RefSeq" id="NP_445864.1">
    <property type="nucleotide sequence ID" value="NM_053412.1"/>
</dbReference>
<dbReference type="SMR" id="Q9JIL3"/>
<dbReference type="BioGRID" id="249972">
    <property type="interactions" value="3"/>
</dbReference>
<dbReference type="CORUM" id="Q9JIL3"/>
<dbReference type="FunCoup" id="Q9JIL3">
    <property type="interactions" value="3699"/>
</dbReference>
<dbReference type="IntAct" id="Q9JIL3">
    <property type="interactions" value="2"/>
</dbReference>
<dbReference type="STRING" id="10116.ENSRNOP00000073179"/>
<dbReference type="iPTMnet" id="Q9JIL3"/>
<dbReference type="PhosphoSitePlus" id="Q9JIL3"/>
<dbReference type="jPOST" id="Q9JIL3"/>
<dbReference type="PaxDb" id="10116-ENSRNOP00000009354"/>
<dbReference type="GeneID" id="84472"/>
<dbReference type="KEGG" id="rno:84472"/>
<dbReference type="UCSC" id="RGD:619734">
    <molecule id="Q9JIL3-1"/>
    <property type="organism name" value="rat"/>
</dbReference>
<dbReference type="AGR" id="RGD:619734"/>
<dbReference type="CTD" id="3609"/>
<dbReference type="RGD" id="619734">
    <property type="gene designation" value="Ilf3"/>
</dbReference>
<dbReference type="eggNOG" id="KOG3792">
    <property type="taxonomic scope" value="Eukaryota"/>
</dbReference>
<dbReference type="InParanoid" id="Q9JIL3"/>
<dbReference type="OrthoDB" id="8898434at2759"/>
<dbReference type="PhylomeDB" id="Q9JIL3"/>
<dbReference type="Reactome" id="R-RNO-9833482">
    <property type="pathway name" value="PKR-mediated signaling"/>
</dbReference>
<dbReference type="PRO" id="PR:Q9JIL3"/>
<dbReference type="Proteomes" id="UP000002494">
    <property type="component" value="Unplaced"/>
</dbReference>
<dbReference type="GO" id="GO:0005737">
    <property type="term" value="C:cytoplasm"/>
    <property type="evidence" value="ECO:0000250"/>
    <property type="project" value="UniProtKB"/>
</dbReference>
<dbReference type="GO" id="GO:0005730">
    <property type="term" value="C:nucleolus"/>
    <property type="evidence" value="ECO:0007669"/>
    <property type="project" value="UniProtKB-SubCell"/>
</dbReference>
<dbReference type="GO" id="GO:0005634">
    <property type="term" value="C:nucleus"/>
    <property type="evidence" value="ECO:0000250"/>
    <property type="project" value="UniProtKB"/>
</dbReference>
<dbReference type="GO" id="GO:1990904">
    <property type="term" value="C:ribonucleoprotein complex"/>
    <property type="evidence" value="ECO:0000250"/>
    <property type="project" value="UniProtKB"/>
</dbReference>
<dbReference type="GO" id="GO:0003677">
    <property type="term" value="F:DNA binding"/>
    <property type="evidence" value="ECO:0000266"/>
    <property type="project" value="RGD"/>
</dbReference>
<dbReference type="GO" id="GO:0003700">
    <property type="term" value="F:DNA-binding transcription factor activity"/>
    <property type="evidence" value="ECO:0000304"/>
    <property type="project" value="RGD"/>
</dbReference>
<dbReference type="GO" id="GO:0003725">
    <property type="term" value="F:double-stranded RNA binding"/>
    <property type="evidence" value="ECO:0000266"/>
    <property type="project" value="RGD"/>
</dbReference>
<dbReference type="GO" id="GO:0019899">
    <property type="term" value="F:enzyme binding"/>
    <property type="evidence" value="ECO:0000353"/>
    <property type="project" value="RGD"/>
</dbReference>
<dbReference type="GO" id="GO:0035925">
    <property type="term" value="F:mRNA 3'-UTR AU-rich region binding"/>
    <property type="evidence" value="ECO:0000250"/>
    <property type="project" value="UniProtKB"/>
</dbReference>
<dbReference type="GO" id="GO:0003727">
    <property type="term" value="F:single-stranded RNA binding"/>
    <property type="evidence" value="ECO:0000318"/>
    <property type="project" value="GO_Central"/>
</dbReference>
<dbReference type="GO" id="GO:0001618">
    <property type="term" value="F:virus receptor activity"/>
    <property type="evidence" value="ECO:0000266"/>
    <property type="project" value="RGD"/>
</dbReference>
<dbReference type="GO" id="GO:0051607">
    <property type="term" value="P:defense response to virus"/>
    <property type="evidence" value="ECO:0007669"/>
    <property type="project" value="UniProtKB-KW"/>
</dbReference>
<dbReference type="GO" id="GO:0045892">
    <property type="term" value="P:negative regulation of DNA-templated transcription"/>
    <property type="evidence" value="ECO:0000266"/>
    <property type="project" value="RGD"/>
</dbReference>
<dbReference type="GO" id="GO:0017148">
    <property type="term" value="P:negative regulation of translation"/>
    <property type="evidence" value="ECO:0000250"/>
    <property type="project" value="UniProtKB"/>
</dbReference>
<dbReference type="GO" id="GO:0045071">
    <property type="term" value="P:negative regulation of viral genome replication"/>
    <property type="evidence" value="ECO:0000250"/>
    <property type="project" value="UniProtKB"/>
</dbReference>
<dbReference type="GO" id="GO:0045893">
    <property type="term" value="P:positive regulation of DNA-templated transcription"/>
    <property type="evidence" value="ECO:0000266"/>
    <property type="project" value="RGD"/>
</dbReference>
<dbReference type="GO" id="GO:0006479">
    <property type="term" value="P:protein methylation"/>
    <property type="evidence" value="ECO:0000314"/>
    <property type="project" value="MGI"/>
</dbReference>
<dbReference type="GO" id="GO:0006468">
    <property type="term" value="P:protein phosphorylation"/>
    <property type="evidence" value="ECO:0000250"/>
    <property type="project" value="UniProtKB"/>
</dbReference>
<dbReference type="GO" id="GO:0160091">
    <property type="term" value="P:spliceosome-depend formation of circular RNA"/>
    <property type="evidence" value="ECO:0000250"/>
    <property type="project" value="UniProtKB"/>
</dbReference>
<dbReference type="CDD" id="cd19910">
    <property type="entry name" value="DSRM_ILF3_rpt1"/>
    <property type="match status" value="1"/>
</dbReference>
<dbReference type="CDD" id="cd19912">
    <property type="entry name" value="DSRM_ILF3_rpt2"/>
    <property type="match status" value="1"/>
</dbReference>
<dbReference type="FunFam" id="1.10.1410.40:FF:000001">
    <property type="entry name" value="interleukin enhancer-binding factor 3 isoform X1"/>
    <property type="match status" value="1"/>
</dbReference>
<dbReference type="FunFam" id="3.30.160.20:FF:000006">
    <property type="entry name" value="interleukin enhancer-binding factor 3 isoform X2"/>
    <property type="match status" value="1"/>
</dbReference>
<dbReference type="FunFam" id="3.30.160.20:FF:000008">
    <property type="entry name" value="interleukin enhancer-binding factor 3 isoform X2"/>
    <property type="match status" value="1"/>
</dbReference>
<dbReference type="Gene3D" id="1.10.1410.40">
    <property type="match status" value="1"/>
</dbReference>
<dbReference type="Gene3D" id="3.30.160.20">
    <property type="match status" value="2"/>
</dbReference>
<dbReference type="Gene3D" id="3.30.460.10">
    <property type="entry name" value="Beta Polymerase, domain 2"/>
    <property type="match status" value="2"/>
</dbReference>
<dbReference type="InterPro" id="IPR014720">
    <property type="entry name" value="dsRBD_dom"/>
</dbReference>
<dbReference type="InterPro" id="IPR033099">
    <property type="entry name" value="DSRM1_ILF3"/>
</dbReference>
<dbReference type="InterPro" id="IPR006561">
    <property type="entry name" value="DZF_dom"/>
</dbReference>
<dbReference type="InterPro" id="IPR049402">
    <property type="entry name" value="DZF_dom_C"/>
</dbReference>
<dbReference type="InterPro" id="IPR049401">
    <property type="entry name" value="DZF_dom_N"/>
</dbReference>
<dbReference type="InterPro" id="IPR043519">
    <property type="entry name" value="NT_sf"/>
</dbReference>
<dbReference type="PANTHER" id="PTHR45762:SF4">
    <property type="entry name" value="INTERLEUKIN ENHANCER-BINDING FACTOR 3"/>
    <property type="match status" value="1"/>
</dbReference>
<dbReference type="PANTHER" id="PTHR45762">
    <property type="entry name" value="ZINC FINGER RNA-BINDING PROTEIN"/>
    <property type="match status" value="1"/>
</dbReference>
<dbReference type="Pfam" id="PF00035">
    <property type="entry name" value="dsrm"/>
    <property type="match status" value="2"/>
</dbReference>
<dbReference type="Pfam" id="PF20965">
    <property type="entry name" value="DZF_C"/>
    <property type="match status" value="1"/>
</dbReference>
<dbReference type="Pfam" id="PF07528">
    <property type="entry name" value="DZF_N"/>
    <property type="match status" value="1"/>
</dbReference>
<dbReference type="SMART" id="SM00358">
    <property type="entry name" value="DSRM"/>
    <property type="match status" value="2"/>
</dbReference>
<dbReference type="SMART" id="SM00572">
    <property type="entry name" value="DZF"/>
    <property type="match status" value="1"/>
</dbReference>
<dbReference type="SUPFAM" id="SSF54768">
    <property type="entry name" value="dsRNA-binding domain-like"/>
    <property type="match status" value="2"/>
</dbReference>
<dbReference type="PROSITE" id="PS50137">
    <property type="entry name" value="DS_RBD"/>
    <property type="match status" value="2"/>
</dbReference>
<dbReference type="PROSITE" id="PS51703">
    <property type="entry name" value="DZF"/>
    <property type="match status" value="1"/>
</dbReference>
<feature type="chain" id="PRO_0000126072" description="Interleukin enhancer-binding factor 3">
    <location>
        <begin position="1"/>
        <end position="897"/>
    </location>
</feature>
<feature type="domain" description="DZF" evidence="4">
    <location>
        <begin position="5"/>
        <end position="378"/>
    </location>
</feature>
<feature type="domain" description="DRBM 1" evidence="3">
    <location>
        <begin position="398"/>
        <end position="467"/>
    </location>
</feature>
<feature type="domain" description="DRBM 2" evidence="3">
    <location>
        <begin position="524"/>
        <end position="590"/>
    </location>
</feature>
<feature type="region of interest" description="Disordered" evidence="5">
    <location>
        <begin position="52"/>
        <end position="85"/>
    </location>
</feature>
<feature type="region of interest" description="Disordered" evidence="5">
    <location>
        <begin position="363"/>
        <end position="401"/>
    </location>
</feature>
<feature type="region of interest" description="Disordered" evidence="5">
    <location>
        <begin position="466"/>
        <end position="524"/>
    </location>
</feature>
<feature type="region of interest" description="Interaction with PRMT1">
    <location>
        <begin position="609"/>
        <end position="897"/>
    </location>
</feature>
<feature type="region of interest" description="Disordered" evidence="5">
    <location>
        <begin position="624"/>
        <end position="662"/>
    </location>
</feature>
<feature type="region of interest" description="Disordered" evidence="5">
    <location>
        <begin position="720"/>
        <end position="897"/>
    </location>
</feature>
<feature type="short sequence motif" description="Bipartite nuclear localization signal" evidence="2">
    <location>
        <begin position="371"/>
        <end position="389"/>
    </location>
</feature>
<feature type="compositionally biased region" description="Acidic residues" evidence="5">
    <location>
        <begin position="60"/>
        <end position="73"/>
    </location>
</feature>
<feature type="compositionally biased region" description="Basic and acidic residues" evidence="5">
    <location>
        <begin position="74"/>
        <end position="85"/>
    </location>
</feature>
<feature type="compositionally biased region" description="Basic and acidic residues" evidence="5">
    <location>
        <begin position="372"/>
        <end position="383"/>
    </location>
</feature>
<feature type="compositionally biased region" description="Basic and acidic residues" evidence="5">
    <location>
        <begin position="472"/>
        <end position="481"/>
    </location>
</feature>
<feature type="compositionally biased region" description="Low complexity" evidence="5">
    <location>
        <begin position="499"/>
        <end position="508"/>
    </location>
</feature>
<feature type="compositionally biased region" description="Gly residues" evidence="5">
    <location>
        <begin position="644"/>
        <end position="662"/>
    </location>
</feature>
<feature type="compositionally biased region" description="Low complexity" evidence="5">
    <location>
        <begin position="745"/>
        <end position="769"/>
    </location>
</feature>
<feature type="compositionally biased region" description="Low complexity" evidence="5">
    <location>
        <begin position="783"/>
        <end position="794"/>
    </location>
</feature>
<feature type="compositionally biased region" description="Low complexity" evidence="5">
    <location>
        <begin position="802"/>
        <end position="812"/>
    </location>
</feature>
<feature type="compositionally biased region" description="Gly residues" evidence="5">
    <location>
        <begin position="813"/>
        <end position="822"/>
    </location>
</feature>
<feature type="compositionally biased region" description="Low complexity" evidence="5">
    <location>
        <begin position="823"/>
        <end position="833"/>
    </location>
</feature>
<feature type="compositionally biased region" description="Gly residues" evidence="5">
    <location>
        <begin position="834"/>
        <end position="844"/>
    </location>
</feature>
<feature type="compositionally biased region" description="Low complexity" evidence="5">
    <location>
        <begin position="845"/>
        <end position="885"/>
    </location>
</feature>
<feature type="modified residue" description="Phosphothreonine" evidence="7">
    <location>
        <position position="67"/>
    </location>
</feature>
<feature type="modified residue" description="N6-acetyllysine" evidence="1">
    <location>
        <position position="100"/>
    </location>
</feature>
<feature type="modified residue" description="Phosphothreonine; by PKR" evidence="1">
    <location>
        <position position="188"/>
    </location>
</feature>
<feature type="modified residue" description="Phosphoserine" evidence="1">
    <location>
        <position position="190"/>
    </location>
</feature>
<feature type="modified residue" description="Phosphothreonine; by PKR" evidence="1">
    <location>
        <position position="315"/>
    </location>
</feature>
<feature type="modified residue" description="Phosphoserine" evidence="7">
    <location>
        <position position="382"/>
    </location>
</feature>
<feature type="modified residue" description="Phosphoserine" evidence="1">
    <location>
        <position position="384"/>
    </location>
</feature>
<feature type="modified residue" description="N6-acetyllysine" evidence="1">
    <location>
        <position position="460"/>
    </location>
</feature>
<feature type="modified residue" description="Phosphoserine" evidence="7">
    <location>
        <position position="476"/>
    </location>
</feature>
<feature type="modified residue" description="Phosphoserine" evidence="7">
    <location>
        <position position="477"/>
    </location>
</feature>
<feature type="modified residue" description="Phosphoserine" evidence="7">
    <location>
        <position position="482"/>
    </location>
</feature>
<feature type="modified residue" description="Phosphoserine" evidence="7">
    <location>
        <position position="486"/>
    </location>
</feature>
<feature type="modified residue" description="Phosphoserine" evidence="1">
    <location>
        <position position="794"/>
    </location>
</feature>
<feature type="modified residue" description="Phosphoserine" evidence="1">
    <location>
        <position position="812"/>
    </location>
</feature>
<feature type="modified residue" description="Phosphoserine" evidence="1">
    <location>
        <position position="814"/>
    </location>
</feature>
<feature type="modified residue" description="Phosphoserine" evidence="1">
    <location>
        <position position="818"/>
    </location>
</feature>
<feature type="cross-link" description="Glycyl lysine isopeptide (Lys-Gly) (interchain with G-Cter in ubiquitin)" evidence="1">
    <location>
        <position position="297"/>
    </location>
</feature>
<feature type="cross-link" description="Glycyl lysine isopeptide (Lys-Gly) (interchain with G-Cter in SUMO1)" evidence="1">
    <location>
        <position position="348"/>
    </location>
</feature>
<feature type="cross-link" description="Glycyl lysine isopeptide (Lys-Gly) (interchain with G-Cter in SUMO2)" evidence="1">
    <location>
        <position position="396"/>
    </location>
</feature>
<feature type="cross-link" description="Glycyl lysine isopeptide (Lys-Gly) (interchain with G-Cter in SUMO2)" evidence="1">
    <location>
        <position position="489"/>
    </location>
</feature>
<feature type="splice variant" id="VSP_013409" description="In isoform 2." evidence="6">
    <original>M</original>
    <variation>MALYHHHFITRRRR</variation>
    <location>
        <position position="1"/>
    </location>
</feature>
<proteinExistence type="evidence at protein level"/>
<organism>
    <name type="scientific">Rattus norvegicus</name>
    <name type="common">Rat</name>
    <dbReference type="NCBI Taxonomy" id="10116"/>
    <lineage>
        <taxon>Eukaryota</taxon>
        <taxon>Metazoa</taxon>
        <taxon>Chordata</taxon>
        <taxon>Craniata</taxon>
        <taxon>Vertebrata</taxon>
        <taxon>Euteleostomi</taxon>
        <taxon>Mammalia</taxon>
        <taxon>Eutheria</taxon>
        <taxon>Euarchontoglires</taxon>
        <taxon>Glires</taxon>
        <taxon>Rodentia</taxon>
        <taxon>Myomorpha</taxon>
        <taxon>Muroidea</taxon>
        <taxon>Muridae</taxon>
        <taxon>Murinae</taxon>
        <taxon>Rattus</taxon>
    </lineage>
</organism>
<comment type="function">
    <text evidence="1">RNA-binding protein that plays an essential role in the biogenesis of circular RNAs (circRNAs) which are produced by back-splicing circularization of pre-mRNAs. Within the nucleus, promotes circRNAs processing by stabilizing the regulatory elements residing in the flanking introns of the circularized exons. Plays thereby a role in the back-splicing of a subset of circRNAs. As a consequence, participates in a wide range of transcriptional and post-transcriptional processes. Binds to poly-U elements and AU-rich elements (AREs) in the 3'-UTR of target mRNAs (By similarity). Upon viral infection, ILF3 accumulates in the cytoplasm and participates in the innate antiviral response. Mechanistically, ILF3 becomes phosphorylated and activated by the double-stranded RNA-activated protein kinase/PKR which releases ILF3 from cellular mature circRNAs. In turn, unbound ILF3 molecules are able to interact with and thus inhibit viral mRNAs.</text>
</comment>
<comment type="subunit">
    <text evidence="1">Identified in a IGF2BP1-dependent mRNP granule complex containing untranslated mRNAs. Interacts with FUS and SMN. Interacts (via C-terminus) with PRMT1. Forms a complex with ILF2. Can also bind to PRKDC/XRCC7: this may stabilize the interaction of PRKDC/XRCC7 and the heterodimeric complex of XRCC6/KU70 and XRCC5/KU80. Forms a heteromeric complex with ZNF346 and ILF3. Found in a nuclear export complex with XPO5, ILF3, Ran and double-stranded RNA or double-stranded minihelix VA1 RNA. Found in a nuclear export complex with XPO5, RAN, ILF3, ZNF346 and double-stranded RNA. Interacts with XPO5 and ZNF346. Forms a complex with ILF2, YLPM1, KHDRBS1, RBMX, NCOA5 and PPP1CA. Interacts with AGO1 and AGO2. Interacts with DHX36; this interaction occurs in a RNA-dependent manner. Interacts with ELAVL1; this interaction occurs in a RNA-dependent manner. Interacts with HAVCR2; this interaction promotes ILF3 ubiquitination and subsequent degradation (By similarity).</text>
</comment>
<comment type="interaction">
    <interactant intactId="EBI-78714">
        <id>Q9JIL3</id>
    </interactant>
    <interactant intactId="EBI-78708">
        <id>Q63009</id>
        <label>Prmt1</label>
    </interactant>
    <organismsDiffer>false</organismsDiffer>
    <experiments>2</experiments>
</comment>
<comment type="subcellular location">
    <subcellularLocation>
        <location evidence="1">Nucleus</location>
        <location evidence="1">Nucleolus</location>
    </subcellularLocation>
    <subcellularLocation>
        <location evidence="1">Cytoplasm</location>
    </subcellularLocation>
    <subcellularLocation>
        <location evidence="1">Nucleus</location>
    </subcellularLocation>
    <text evidence="1">Localizes in the cytoplasm in response to viral infection. The unphosphorylated form is retained in the nucleus by ILF2. Phosphorylation at Thr-188 and Thr-315 causes the dissociation of ILF2 from the ILF2-ILF3 complex resulting in a cytoplasmic sequestration of ILF3. Localized in cytoplasmic mRNP granules containing untranslated mRNAs.</text>
</comment>
<comment type="alternative products">
    <event type="alternative splicing"/>
    <isoform>
        <id>Q9JIL3-1</id>
        <name>1</name>
        <sequence type="displayed"/>
    </isoform>
    <isoform>
        <id>Q9JIL3-2</id>
        <name>2</name>
        <sequence type="described" ref="VSP_013409"/>
    </isoform>
</comment>
<comment type="PTM">
    <text evidence="1">Phosphorylated at Thr-188 and Thr-315 by PKR in response to RNA viruses. This phosphorylation results in the dissociation of ILF2 from the ILF2-ILF3 complex resulting in a cytoplasmic sequestration of ILF3 where it can bind to viral RNAs and impede viral replication.</text>
</comment>
<comment type="PTM">
    <text evidence="1">Methylated by protein arginine N-methyltransferase 1.</text>
</comment>
<protein>
    <recommendedName>
        <fullName>Interleukin enhancer-binding factor 3</fullName>
    </recommendedName>
</protein>